<organism>
    <name type="scientific">Conus lynceus</name>
    <name type="common">Lynceus cone</name>
    <dbReference type="NCBI Taxonomy" id="289038"/>
    <lineage>
        <taxon>Eukaryota</taxon>
        <taxon>Metazoa</taxon>
        <taxon>Spiralia</taxon>
        <taxon>Lophotrochozoa</taxon>
        <taxon>Mollusca</taxon>
        <taxon>Gastropoda</taxon>
        <taxon>Caenogastropoda</taxon>
        <taxon>Neogastropoda</taxon>
        <taxon>Conoidea</taxon>
        <taxon>Conidae</taxon>
        <taxon>Conus</taxon>
        <taxon>Phasmoconus</taxon>
    </lineage>
</organism>
<protein>
    <recommendedName>
        <fullName evidence="5">Conantokin-L</fullName>
        <shortName evidence="5">Con-L</shortName>
    </recommendedName>
</protein>
<dbReference type="SMR" id="P69745"/>
<dbReference type="ConoServer" id="1374">
    <property type="toxin name" value="Conantokin-L precursor"/>
</dbReference>
<dbReference type="GO" id="GO:0005576">
    <property type="term" value="C:extracellular region"/>
    <property type="evidence" value="ECO:0007669"/>
    <property type="project" value="UniProtKB-SubCell"/>
</dbReference>
<dbReference type="GO" id="GO:0035792">
    <property type="term" value="C:host cell postsynaptic membrane"/>
    <property type="evidence" value="ECO:0007669"/>
    <property type="project" value="UniProtKB-KW"/>
</dbReference>
<dbReference type="GO" id="GO:0099106">
    <property type="term" value="F:ion channel regulator activity"/>
    <property type="evidence" value="ECO:0007669"/>
    <property type="project" value="UniProtKB-KW"/>
</dbReference>
<dbReference type="GO" id="GO:0046872">
    <property type="term" value="F:metal ion binding"/>
    <property type="evidence" value="ECO:0007669"/>
    <property type="project" value="UniProtKB-KW"/>
</dbReference>
<dbReference type="GO" id="GO:0090729">
    <property type="term" value="F:toxin activity"/>
    <property type="evidence" value="ECO:0007669"/>
    <property type="project" value="UniProtKB-KW"/>
</dbReference>
<dbReference type="InterPro" id="IPR005918">
    <property type="entry name" value="Conantokin_CS"/>
</dbReference>
<dbReference type="Pfam" id="PF10550">
    <property type="entry name" value="Toxin_36"/>
    <property type="match status" value="1"/>
</dbReference>
<dbReference type="PROSITE" id="PS60025">
    <property type="entry name" value="CONANTOKIN"/>
    <property type="match status" value="1"/>
</dbReference>
<evidence type="ECO:0000250" key="1">
    <source>
        <dbReference type="UniProtKB" id="P07231"/>
    </source>
</evidence>
<evidence type="ECO:0000250" key="2">
    <source>
        <dbReference type="UniProtKB" id="P58806"/>
    </source>
</evidence>
<evidence type="ECO:0000255" key="3"/>
<evidence type="ECO:0000269" key="4">
    <source>
    </source>
</evidence>
<evidence type="ECO:0000303" key="5">
    <source>
    </source>
</evidence>
<evidence type="ECO:0000305" key="6"/>
<evidence type="ECO:0000305" key="7">
    <source>
    </source>
</evidence>
<name>CKL_CONLY</name>
<sequence length="101" mass="11181">MQLYTYLYLLVPLVTFHLILGTGTLDHGGALTERRSTDAIALKPEPVLLQKSSARSTDDNGNDRLTQMKRILKKRGNKARGEEEVAKMAAELAREDAVNGK</sequence>
<accession>P69745</accession>
<proteinExistence type="evidence at protein level"/>
<feature type="signal peptide" evidence="3">
    <location>
        <begin position="1"/>
        <end position="21"/>
    </location>
</feature>
<feature type="propeptide" id="PRO_0000035062" evidence="7">
    <location>
        <begin position="22"/>
        <end position="80"/>
    </location>
</feature>
<feature type="peptide" id="PRO_0000035063" description="Conantokin-L" evidence="7">
    <location>
        <begin position="81"/>
        <end position="99"/>
    </location>
</feature>
<feature type="binding site" description="via 4-carboxyglutamate" evidence="1">
    <location>
        <position position="91"/>
    </location>
    <ligand>
        <name>a divalent metal cation</name>
        <dbReference type="ChEBI" id="CHEBI:60240"/>
    </ligand>
</feature>
<feature type="binding site" description="via 4-carboxyglutamate" evidence="1">
    <location>
        <position position="95"/>
    </location>
    <ligand>
        <name>a divalent metal cation</name>
        <dbReference type="ChEBI" id="CHEBI:60240"/>
    </ligand>
</feature>
<feature type="modified residue" description="4-carboxyglutamate" evidence="1 7">
    <location>
        <position position="83"/>
    </location>
</feature>
<feature type="modified residue" description="4-carboxyglutamate" evidence="1 7">
    <location>
        <position position="84"/>
    </location>
</feature>
<feature type="modified residue" description="4-carboxyglutamate" evidence="1 7">
    <location>
        <position position="91"/>
    </location>
</feature>
<feature type="modified residue" description="4-carboxyglutamate" evidence="1 7">
    <location>
        <position position="95"/>
    </location>
</feature>
<feature type="modified residue" description="Asparagine amide" evidence="1 7">
    <location>
        <position position="99"/>
    </location>
</feature>
<reference key="1">
    <citation type="journal article" date="2002" name="Epilepsy Res.">
        <title>Conantokin-L, a new NMDA receptor antagonist: determinants for anticonvulsant potency.</title>
        <authorList>
            <person name="Jimenez E.C."/>
            <person name="Donevan S."/>
            <person name="Walker C."/>
            <person name="Zhou L.-M."/>
            <person name="Nielsen J."/>
            <person name="Cruz L.J."/>
            <person name="Armstrong H."/>
            <person name="White H.S."/>
            <person name="Olivera B.M."/>
        </authorList>
    </citation>
    <scope>NUCLEOTIDE SEQUENCE [MRNA]</scope>
    <scope>SYNTHESIS OF 81-99</scope>
    <scope>FUNCTION</scope>
    <scope>GAMMA-CARBOXYGLUTAMATION AT GLU-83; GLU-84; GLU-91 AND GLU-95</scope>
    <scope>AMIDATION AT ASN-99</scope>
    <source>
        <tissue>Venom duct</tissue>
    </source>
</reference>
<comment type="function">
    <text evidence="4">Conantokins inhibit N-methyl-D-aspartate (NMDA) receptors. This toxin is far less potent as an anticonvulsant compound than conantokin-R. It induces sleep-like symptoms in mice.</text>
</comment>
<comment type="cofactor">
    <cofactor evidence="2">
        <name>Ca(2+)</name>
        <dbReference type="ChEBI" id="CHEBI:29108"/>
    </cofactor>
    <cofactor evidence="2">
        <name>Mg(2+)</name>
        <dbReference type="ChEBI" id="CHEBI:18420"/>
    </cofactor>
    <text evidence="2">Divalent cations stabilize the toxin the in alpha-helix conformation.</text>
</comment>
<comment type="subcellular location">
    <subcellularLocation>
        <location evidence="7">Secreted</location>
    </subcellularLocation>
</comment>
<comment type="tissue specificity">
    <text evidence="7">Expressed by the venom duct.</text>
</comment>
<comment type="miscellaneous">
    <text evidence="6">The mature peptide does not contain cysteine residue.</text>
</comment>
<comment type="miscellaneous">
    <text evidence="2">Stabilized by divalent cations. Calcium or magnesium.</text>
</comment>
<comment type="similarity">
    <text evidence="6">Belongs to the conotoxin B superfamily.</text>
</comment>
<keyword id="KW-0027">Amidation</keyword>
<keyword id="KW-0106">Calcium</keyword>
<keyword id="KW-0301">Gamma-carboxyglutamic acid</keyword>
<keyword id="KW-0872">Ion channel impairing toxin</keyword>
<keyword id="KW-1028">Ionotropic glutamate receptor inhibitor</keyword>
<keyword id="KW-0460">Magnesium</keyword>
<keyword id="KW-0479">Metal-binding</keyword>
<keyword id="KW-0528">Neurotoxin</keyword>
<keyword id="KW-0629">Postsynaptic neurotoxin</keyword>
<keyword id="KW-0964">Secreted</keyword>
<keyword id="KW-0732">Signal</keyword>
<keyword id="KW-0800">Toxin</keyword>